<protein>
    <recommendedName>
        <fullName evidence="1">Flagellar assembly factor FliW</fullName>
    </recommendedName>
</protein>
<comment type="function">
    <text evidence="3 4">Acts as an anti-CsrA protein, binds CsrA and prevents it from repressing translation of its target genes, one of which is flagellin. Binds to flagellin and participates in the assembly of the flagellum (Probable). Antagonizes CsrA-mediated translational repression of flaA in a promoter-independent manner, leading to expression of FlaA and probably other flagellar genes. Binds to FlaA, which releases CsrA to repress translation of flaA mRNA. Also has a negative effect on flaA transcription, and influences the localization of flaA mRNA to the poles of short, probably elongating, cells.</text>
</comment>
<comment type="subunit">
    <text evidence="3">Interacts with translational regulator CsrA and flagellin A (flaA) (PubMed:27229370).</text>
</comment>
<comment type="subcellular location">
    <subcellularLocation>
        <location evidence="1">Cytoplasm</location>
    </subcellularLocation>
</comment>
<comment type="disruption phenotype">
    <text evidence="2 3">No longer autoagglutinates, loss of motility and decreased ability to invade human cell line (PubMed:11895937). Significantly decreased translation of flagellin A, 2-fold increase in flaA mRNA levels. Has 1 short flagella, the average swimming distance decreases about 30%. The mRNA for flaA is no longer localized to the cell poles in short, probably elongating, cells. A double csrA-fliW deletion expresses the same amount of flagellin A as the csrA deletion, has 2 wild-type length flagella, a wild-type swimming distance and restored localization of flaA mRNA to the poles of short, probably elongating, cells.</text>
</comment>
<comment type="similarity">
    <text evidence="1">Belongs to the FliW family.</text>
</comment>
<gene>
    <name evidence="1" type="primary">fliW</name>
    <name type="ordered locus">Cj1075</name>
</gene>
<dbReference type="EMBL" id="AL111168">
    <property type="protein sequence ID" value="CAL35192.1"/>
    <property type="molecule type" value="Genomic_DNA"/>
</dbReference>
<dbReference type="PIR" id="F81310">
    <property type="entry name" value="F81310"/>
</dbReference>
<dbReference type="RefSeq" id="WP_002852982.1">
    <property type="nucleotide sequence ID" value="NZ_SZUC01000001.1"/>
</dbReference>
<dbReference type="RefSeq" id="YP_002344468.1">
    <property type="nucleotide sequence ID" value="NC_002163.1"/>
</dbReference>
<dbReference type="SMR" id="Q0P9H9"/>
<dbReference type="IntAct" id="Q0P9H9">
    <property type="interactions" value="14"/>
</dbReference>
<dbReference type="STRING" id="192222.Cj1075"/>
<dbReference type="PaxDb" id="192222-Cj1075"/>
<dbReference type="EnsemblBacteria" id="CAL35192">
    <property type="protein sequence ID" value="CAL35192"/>
    <property type="gene ID" value="Cj1075"/>
</dbReference>
<dbReference type="GeneID" id="905366"/>
<dbReference type="KEGG" id="cje:Cj1075"/>
<dbReference type="PATRIC" id="fig|192222.6.peg.1057"/>
<dbReference type="eggNOG" id="COG1699">
    <property type="taxonomic scope" value="Bacteria"/>
</dbReference>
<dbReference type="HOGENOM" id="CLU_112356_2_0_7"/>
<dbReference type="OrthoDB" id="5372942at2"/>
<dbReference type="Proteomes" id="UP000000799">
    <property type="component" value="Chromosome"/>
</dbReference>
<dbReference type="GO" id="GO:0005737">
    <property type="term" value="C:cytoplasm"/>
    <property type="evidence" value="ECO:0007669"/>
    <property type="project" value="UniProtKB-SubCell"/>
</dbReference>
<dbReference type="GO" id="GO:0044780">
    <property type="term" value="P:bacterial-type flagellum assembly"/>
    <property type="evidence" value="ECO:0007669"/>
    <property type="project" value="UniProtKB-UniRule"/>
</dbReference>
<dbReference type="GO" id="GO:0006417">
    <property type="term" value="P:regulation of translation"/>
    <property type="evidence" value="ECO:0007669"/>
    <property type="project" value="UniProtKB-KW"/>
</dbReference>
<dbReference type="Gene3D" id="2.30.290.10">
    <property type="entry name" value="BH3618-like"/>
    <property type="match status" value="1"/>
</dbReference>
<dbReference type="HAMAP" id="MF_01185">
    <property type="entry name" value="FliW"/>
    <property type="match status" value="1"/>
</dbReference>
<dbReference type="InterPro" id="IPR003775">
    <property type="entry name" value="Flagellar_assembly_factor_FliW"/>
</dbReference>
<dbReference type="InterPro" id="IPR024046">
    <property type="entry name" value="Flagellar_assmbl_FliW_dom_sf"/>
</dbReference>
<dbReference type="NCBIfam" id="NF009790">
    <property type="entry name" value="PRK13282.1"/>
    <property type="match status" value="1"/>
</dbReference>
<dbReference type="PANTHER" id="PTHR39190">
    <property type="entry name" value="FLAGELLAR ASSEMBLY FACTOR FLIW"/>
    <property type="match status" value="1"/>
</dbReference>
<dbReference type="PANTHER" id="PTHR39190:SF1">
    <property type="entry name" value="FLAGELLAR ASSEMBLY FACTOR FLIW"/>
    <property type="match status" value="1"/>
</dbReference>
<dbReference type="Pfam" id="PF02623">
    <property type="entry name" value="FliW"/>
    <property type="match status" value="1"/>
</dbReference>
<dbReference type="SUPFAM" id="SSF141457">
    <property type="entry name" value="BH3618-like"/>
    <property type="match status" value="1"/>
</dbReference>
<keyword id="KW-1005">Bacterial flagellum biogenesis</keyword>
<keyword id="KW-0143">Chaperone</keyword>
<keyword id="KW-0963">Cytoplasm</keyword>
<keyword id="KW-1185">Reference proteome</keyword>
<keyword id="KW-0810">Translation regulation</keyword>
<accession>Q0P9H9</accession>
<sequence length="129" mass="14844">MTLAVKCPILGFEETKNMEFSTIDEVFVRLKSLDGKDFSFVLINPYLIRPDYEFDIPTYYQELLSLTPESNMKIFNIVAIAKSIEESTVNFLAPVVINLDNNTMVQVILDTVNYPDFFQADQIANYIKK</sequence>
<name>FLIW_CAMJE</name>
<reference key="1">
    <citation type="journal article" date="2000" name="Nature">
        <title>The genome sequence of the food-borne pathogen Campylobacter jejuni reveals hypervariable sequences.</title>
        <authorList>
            <person name="Parkhill J."/>
            <person name="Wren B.W."/>
            <person name="Mungall K.L."/>
            <person name="Ketley J.M."/>
            <person name="Churcher C.M."/>
            <person name="Basham D."/>
            <person name="Chillingworth T."/>
            <person name="Davies R.M."/>
            <person name="Feltwell T."/>
            <person name="Holroyd S."/>
            <person name="Jagels K."/>
            <person name="Karlyshev A.V."/>
            <person name="Moule S."/>
            <person name="Pallen M.J."/>
            <person name="Penn C.W."/>
            <person name="Quail M.A."/>
            <person name="Rajandream M.A."/>
            <person name="Rutherford K.M."/>
            <person name="van Vliet A.H.M."/>
            <person name="Whitehead S."/>
            <person name="Barrell B.G."/>
        </authorList>
    </citation>
    <scope>NUCLEOTIDE SEQUENCE [LARGE SCALE GENOMIC DNA]</scope>
    <source>
        <strain>ATCC 700819 / NCTC 11168</strain>
    </source>
</reference>
<reference key="2">
    <citation type="journal article" date="2002" name="Infect. Immun.">
        <title>Identification of motility and autoagglutination Campylobacter jejuni mutants by random transposon mutagenesis.</title>
        <authorList>
            <person name="Golden N.J."/>
            <person name="Acheson D.W.K."/>
        </authorList>
    </citation>
    <scope>ROLE IN MOTILITY AND FLAGELLIN BIOSYNTHESIS</scope>
    <scope>DISRUPTION PHENOTYPE</scope>
    <source>
        <strain>480</strain>
    </source>
</reference>
<reference key="3">
    <citation type="journal article" date="2016" name="Nat. Commun.">
        <title>The CsrA-FliW network controls polar localization of the dual-function flagellin mRNA in Campylobacter jejuni.</title>
        <authorList>
            <person name="Dugar G."/>
            <person name="Svensson S.L."/>
            <person name="Bischler T."/>
            <person name="Waeldchen S."/>
            <person name="Reinhardt R."/>
            <person name="Sauer M."/>
            <person name="Sharma C.M."/>
        </authorList>
    </citation>
    <scope>FUNCTION</scope>
    <scope>INTERACTION WITH CSRA AND FLAA</scope>
    <scope>DISRUPTION PHENOTYPE</scope>
    <source>
        <strain>ATCC 700819 / NCTC 11168</strain>
    </source>
</reference>
<feature type="chain" id="PRO_0000272975" description="Flagellar assembly factor FliW">
    <location>
        <begin position="1"/>
        <end position="129"/>
    </location>
</feature>
<evidence type="ECO:0000255" key="1">
    <source>
        <dbReference type="HAMAP-Rule" id="MF_01185"/>
    </source>
</evidence>
<evidence type="ECO:0000269" key="2">
    <source>
    </source>
</evidence>
<evidence type="ECO:0000269" key="3">
    <source>
    </source>
</evidence>
<evidence type="ECO:0000305" key="4">
    <source>
    </source>
</evidence>
<organism>
    <name type="scientific">Campylobacter jejuni subsp. jejuni serotype O:2 (strain ATCC 700819 / NCTC 11168)</name>
    <dbReference type="NCBI Taxonomy" id="192222"/>
    <lineage>
        <taxon>Bacteria</taxon>
        <taxon>Pseudomonadati</taxon>
        <taxon>Campylobacterota</taxon>
        <taxon>Epsilonproteobacteria</taxon>
        <taxon>Campylobacterales</taxon>
        <taxon>Campylobacteraceae</taxon>
        <taxon>Campylobacter</taxon>
    </lineage>
</organism>
<proteinExistence type="evidence at protein level"/>